<dbReference type="EMBL" id="U79563">
    <property type="protein sequence ID" value="AAC45286.1"/>
    <property type="molecule type" value="Genomic_DNA"/>
</dbReference>
<dbReference type="RefSeq" id="WP_003693736.1">
    <property type="nucleotide sequence ID" value="NZ_WHPL01000002.1"/>
</dbReference>
<dbReference type="SMR" id="O06432"/>
<dbReference type="OMA" id="PWRQTPS"/>
<dbReference type="GO" id="GO:0030288">
    <property type="term" value="C:outer membrane-bounded periplasmic space"/>
    <property type="evidence" value="ECO:0007669"/>
    <property type="project" value="InterPro"/>
</dbReference>
<dbReference type="GO" id="GO:0098797">
    <property type="term" value="C:plasma membrane protein complex"/>
    <property type="evidence" value="ECO:0007669"/>
    <property type="project" value="TreeGrafter"/>
</dbReference>
<dbReference type="GO" id="GO:0031992">
    <property type="term" value="F:energy transducer activity"/>
    <property type="evidence" value="ECO:0007669"/>
    <property type="project" value="InterPro"/>
</dbReference>
<dbReference type="GO" id="GO:0015031">
    <property type="term" value="P:protein transport"/>
    <property type="evidence" value="ECO:0007669"/>
    <property type="project" value="UniProtKB-KW"/>
</dbReference>
<dbReference type="GO" id="GO:0015891">
    <property type="term" value="P:siderophore transport"/>
    <property type="evidence" value="ECO:0007669"/>
    <property type="project" value="InterPro"/>
</dbReference>
<dbReference type="GO" id="GO:0055085">
    <property type="term" value="P:transmembrane transport"/>
    <property type="evidence" value="ECO:0007669"/>
    <property type="project" value="InterPro"/>
</dbReference>
<dbReference type="Gene3D" id="3.30.1150.10">
    <property type="match status" value="1"/>
</dbReference>
<dbReference type="InterPro" id="IPR003538">
    <property type="entry name" value="TonB"/>
</dbReference>
<dbReference type="InterPro" id="IPR051045">
    <property type="entry name" value="TonB-dependent_transducer"/>
</dbReference>
<dbReference type="InterPro" id="IPR006260">
    <property type="entry name" value="TonB/TolA_C"/>
</dbReference>
<dbReference type="InterPro" id="IPR037682">
    <property type="entry name" value="TonB_C"/>
</dbReference>
<dbReference type="NCBIfam" id="TIGR01352">
    <property type="entry name" value="tonB_Cterm"/>
    <property type="match status" value="1"/>
</dbReference>
<dbReference type="PANTHER" id="PTHR33446:SF2">
    <property type="entry name" value="PROTEIN TONB"/>
    <property type="match status" value="1"/>
</dbReference>
<dbReference type="PANTHER" id="PTHR33446">
    <property type="entry name" value="PROTEIN TONB-RELATED"/>
    <property type="match status" value="1"/>
</dbReference>
<dbReference type="Pfam" id="PF03544">
    <property type="entry name" value="TonB_C"/>
    <property type="match status" value="1"/>
</dbReference>
<dbReference type="PRINTS" id="PR01374">
    <property type="entry name" value="TONBPROTEIN"/>
</dbReference>
<dbReference type="SUPFAM" id="SSF74653">
    <property type="entry name" value="TolA/TonB C-terminal domain"/>
    <property type="match status" value="1"/>
</dbReference>
<dbReference type="PROSITE" id="PS52015">
    <property type="entry name" value="TONB_CTD"/>
    <property type="match status" value="1"/>
</dbReference>
<evidence type="ECO:0000250" key="1"/>
<evidence type="ECO:0000255" key="2"/>
<evidence type="ECO:0000255" key="3">
    <source>
        <dbReference type="PROSITE-ProRule" id="PRU01359"/>
    </source>
</evidence>
<evidence type="ECO:0000256" key="4">
    <source>
        <dbReference type="SAM" id="MobiDB-lite"/>
    </source>
</evidence>
<evidence type="ECO:0000305" key="5"/>
<gene>
    <name type="primary">tonB</name>
</gene>
<feature type="chain" id="PRO_0000196201" description="Protein TonB">
    <location>
        <begin position="1"/>
        <end position="283"/>
    </location>
</feature>
<feature type="topological domain" description="Cytoplasmic" evidence="2">
    <location>
        <begin position="1"/>
        <end position="5"/>
    </location>
</feature>
<feature type="transmembrane region" description="Helical; Signal-anchor" evidence="2">
    <location>
        <begin position="6"/>
        <end position="27"/>
    </location>
</feature>
<feature type="topological domain" description="Periplasmic" evidence="2">
    <location>
        <begin position="28"/>
        <end position="283"/>
    </location>
</feature>
<feature type="domain" description="TonB C-terminal" evidence="3">
    <location>
        <begin position="199"/>
        <end position="283"/>
    </location>
</feature>
<feature type="region of interest" description="Disordered" evidence="4">
    <location>
        <begin position="52"/>
        <end position="216"/>
    </location>
</feature>
<feature type="compositionally biased region" description="Pro residues" evidence="4">
    <location>
        <begin position="64"/>
        <end position="83"/>
    </location>
</feature>
<feature type="compositionally biased region" description="Basic and acidic residues" evidence="4">
    <location>
        <begin position="90"/>
        <end position="137"/>
    </location>
</feature>
<feature type="compositionally biased region" description="Gly residues" evidence="4">
    <location>
        <begin position="150"/>
        <end position="178"/>
    </location>
</feature>
<feature type="compositionally biased region" description="Gly residues" evidence="4">
    <location>
        <begin position="185"/>
        <end position="197"/>
    </location>
</feature>
<reference key="1">
    <citation type="journal article" date="1997" name="Mol. Microbiol.">
        <title>Cloning and functional characterization of Neisseria gonorrhoeae tonB, exbB and exbD genes.</title>
        <authorList>
            <person name="Biswas G.D."/>
            <person name="Anderson J.E."/>
            <person name="Sparling P.F."/>
        </authorList>
    </citation>
    <scope>NUCLEOTIDE SEQUENCE [GENOMIC DNA]</scope>
    <source>
        <strain>FA19</strain>
    </source>
</reference>
<accession>O06432</accession>
<name>TONB_NEIGO</name>
<keyword id="KW-0997">Cell inner membrane</keyword>
<keyword id="KW-1003">Cell membrane</keyword>
<keyword id="KW-0472">Membrane</keyword>
<keyword id="KW-0653">Protein transport</keyword>
<keyword id="KW-0735">Signal-anchor</keyword>
<keyword id="KW-0812">Transmembrane</keyword>
<keyword id="KW-1133">Transmembrane helix</keyword>
<keyword id="KW-0813">Transport</keyword>
<sequence>MDKERILTPAVVFSVALLHLAIVALLWQAHKLPVIESGNVIEFVDLGDFGGGGGAPEGAGAPAAPEPQPAPDPPKPVEPPKPVLKPAVTKKADADIQQPKEKPKPEEKPKPEPEPEAKPAPKPAEKPAEKPSEKPAEHSGNASAKAGSEQGNGEGKGTGTKGDGTGRGEGSGKGSGGAKGEHGEGAGGSGGGTGVGSSKGNPLRANGSIPRPAYPALSMENDEQGMVVLSVLVSPGGHVESVKVVKSSGFSRLDNAARKAAQNGHFQANAWTEFKVPVKFELN</sequence>
<comment type="function">
    <text>Pathways of utilization of iron bound to transferrin, lactoferrin and hemoglobin but not to haemin or citrate where dependent on the TonB system.</text>
</comment>
<comment type="subunit">
    <text evidence="1">The accessory proteins ExbB and ExbD seem to form a complex with TonB.</text>
</comment>
<comment type="subcellular location">
    <subcellularLocation>
        <location evidence="1">Cell inner membrane</location>
        <topology evidence="1">Single-pass membrane protein</topology>
        <orientation evidence="1">Periplasmic side</orientation>
    </subcellularLocation>
</comment>
<comment type="similarity">
    <text evidence="5">Belongs to the TonB family.</text>
</comment>
<organism>
    <name type="scientific">Neisseria gonorrhoeae</name>
    <dbReference type="NCBI Taxonomy" id="485"/>
    <lineage>
        <taxon>Bacteria</taxon>
        <taxon>Pseudomonadati</taxon>
        <taxon>Pseudomonadota</taxon>
        <taxon>Betaproteobacteria</taxon>
        <taxon>Neisseriales</taxon>
        <taxon>Neisseriaceae</taxon>
        <taxon>Neisseria</taxon>
    </lineage>
</organism>
<proteinExistence type="inferred from homology"/>
<protein>
    <recommendedName>
        <fullName>Protein TonB</fullName>
    </recommendedName>
</protein>